<evidence type="ECO:0000255" key="1">
    <source>
        <dbReference type="HAMAP-Rule" id="MF_01554"/>
    </source>
</evidence>
<gene>
    <name evidence="1" type="primary">glmM</name>
    <name type="ordered locus">OCAR_7164</name>
    <name type="ordered locus">OCA5_c09430</name>
</gene>
<sequence>MARKYFGTDGIRGRANGVITPELALKVGQAAGLVFQRGEYRHRVVIGKDTRLSGYMIETAMVAGFTSVGMDVLLLGPIPTPAVAMLTKSMRADLGVMISASHNPFADNGIKLFGPSGYKLSDEVELQIEELMDENIDRRLAQSTQLGRARRIDGVHDRYIEFAKRTLPRELSLEGLRVVVDCANGAAYKVVPEALWELGADVIAIGAEPDGMNINKECGSTSPDALAHKVREMRADIGIALDGDADRVLMIDERGHLIDGDQLLAVIAQSWKEDGRLAKPGIVTTVMSNLGLERFLAGEGLSMVRTPVGDRYVLEQMMAQGYNLGGEPSGHIIMSDFTTTGDGFVAALQVLAVVQKLGRPVSEVCHRFEPLPQILKNVRYRSGKPLENPKVQSTIADAEKKLNGCGRLLVRSSGTEPVIRVMGEGDDRDRVEEAVDMIVAALSIGVAA</sequence>
<feature type="chain" id="PRO_1000201123" description="Phosphoglucosamine mutase">
    <location>
        <begin position="1"/>
        <end position="448"/>
    </location>
</feature>
<feature type="active site" description="Phosphoserine intermediate" evidence="1">
    <location>
        <position position="101"/>
    </location>
</feature>
<feature type="binding site" description="via phosphate group" evidence="1">
    <location>
        <position position="101"/>
    </location>
    <ligand>
        <name>Mg(2+)</name>
        <dbReference type="ChEBI" id="CHEBI:18420"/>
    </ligand>
</feature>
<feature type="binding site" evidence="1">
    <location>
        <position position="242"/>
    </location>
    <ligand>
        <name>Mg(2+)</name>
        <dbReference type="ChEBI" id="CHEBI:18420"/>
    </ligand>
</feature>
<feature type="binding site" evidence="1">
    <location>
        <position position="244"/>
    </location>
    <ligand>
        <name>Mg(2+)</name>
        <dbReference type="ChEBI" id="CHEBI:18420"/>
    </ligand>
</feature>
<feature type="binding site" evidence="1">
    <location>
        <position position="246"/>
    </location>
    <ligand>
        <name>Mg(2+)</name>
        <dbReference type="ChEBI" id="CHEBI:18420"/>
    </ligand>
</feature>
<feature type="modified residue" description="Phosphoserine" evidence="1">
    <location>
        <position position="101"/>
    </location>
</feature>
<proteinExistence type="inferred from homology"/>
<protein>
    <recommendedName>
        <fullName evidence="1">Phosphoglucosamine mutase</fullName>
        <ecNumber evidence="1">5.4.2.10</ecNumber>
    </recommendedName>
</protein>
<reference key="1">
    <citation type="journal article" date="2008" name="J. Bacteriol.">
        <title>Genome sequence of the chemolithoautotrophic bacterium Oligotropha carboxidovorans OM5T.</title>
        <authorList>
            <person name="Paul D."/>
            <person name="Bridges S."/>
            <person name="Burgess S.C."/>
            <person name="Dandass Y."/>
            <person name="Lawrence M.L."/>
        </authorList>
    </citation>
    <scope>NUCLEOTIDE SEQUENCE [LARGE SCALE GENOMIC DNA]</scope>
    <source>
        <strain>ATCC 49405 / DSM 1227 / KCTC 32145 / OM5</strain>
    </source>
</reference>
<reference key="2">
    <citation type="journal article" date="2011" name="J. Bacteriol.">
        <title>Complete genome sequences of the chemolithoautotrophic Oligotropha carboxidovorans strains OM4 and OM5.</title>
        <authorList>
            <person name="Volland S."/>
            <person name="Rachinger M."/>
            <person name="Strittmatter A."/>
            <person name="Daniel R."/>
            <person name="Gottschalk G."/>
            <person name="Meyer O."/>
        </authorList>
    </citation>
    <scope>NUCLEOTIDE SEQUENCE [LARGE SCALE GENOMIC DNA]</scope>
    <source>
        <strain>ATCC 49405 / DSM 1227 / KCTC 32145 / OM5</strain>
    </source>
</reference>
<organism>
    <name type="scientific">Afipia carboxidovorans (strain ATCC 49405 / DSM 1227 / KCTC 32145 / OM5)</name>
    <name type="common">Oligotropha carboxidovorans</name>
    <dbReference type="NCBI Taxonomy" id="504832"/>
    <lineage>
        <taxon>Bacteria</taxon>
        <taxon>Pseudomonadati</taxon>
        <taxon>Pseudomonadota</taxon>
        <taxon>Alphaproteobacteria</taxon>
        <taxon>Hyphomicrobiales</taxon>
        <taxon>Nitrobacteraceae</taxon>
        <taxon>Afipia</taxon>
    </lineage>
</organism>
<accession>B6JIL2</accession>
<accession>F8BRJ2</accession>
<dbReference type="EC" id="5.4.2.10" evidence="1"/>
<dbReference type="EMBL" id="CP001196">
    <property type="protein sequence ID" value="ACI94268.1"/>
    <property type="molecule type" value="Genomic_DNA"/>
</dbReference>
<dbReference type="EMBL" id="CP002826">
    <property type="protein sequence ID" value="AEI05665.1"/>
    <property type="molecule type" value="Genomic_DNA"/>
</dbReference>
<dbReference type="RefSeq" id="WP_012564294.1">
    <property type="nucleotide sequence ID" value="NC_015684.1"/>
</dbReference>
<dbReference type="SMR" id="B6JIL2"/>
<dbReference type="STRING" id="504832.OCA5_c09430"/>
<dbReference type="KEGG" id="oca:OCAR_7164"/>
<dbReference type="KEGG" id="ocg:OCA5_c09430"/>
<dbReference type="PATRIC" id="fig|504832.7.peg.999"/>
<dbReference type="eggNOG" id="COG1109">
    <property type="taxonomic scope" value="Bacteria"/>
</dbReference>
<dbReference type="HOGENOM" id="CLU_016950_7_0_5"/>
<dbReference type="OrthoDB" id="9803322at2"/>
<dbReference type="Proteomes" id="UP000007730">
    <property type="component" value="Chromosome"/>
</dbReference>
<dbReference type="GO" id="GO:0005829">
    <property type="term" value="C:cytosol"/>
    <property type="evidence" value="ECO:0007669"/>
    <property type="project" value="TreeGrafter"/>
</dbReference>
<dbReference type="GO" id="GO:0000287">
    <property type="term" value="F:magnesium ion binding"/>
    <property type="evidence" value="ECO:0007669"/>
    <property type="project" value="UniProtKB-UniRule"/>
</dbReference>
<dbReference type="GO" id="GO:0008966">
    <property type="term" value="F:phosphoglucosamine mutase activity"/>
    <property type="evidence" value="ECO:0007669"/>
    <property type="project" value="UniProtKB-UniRule"/>
</dbReference>
<dbReference type="GO" id="GO:0004615">
    <property type="term" value="F:phosphomannomutase activity"/>
    <property type="evidence" value="ECO:0007669"/>
    <property type="project" value="TreeGrafter"/>
</dbReference>
<dbReference type="GO" id="GO:0005975">
    <property type="term" value="P:carbohydrate metabolic process"/>
    <property type="evidence" value="ECO:0007669"/>
    <property type="project" value="InterPro"/>
</dbReference>
<dbReference type="GO" id="GO:0009252">
    <property type="term" value="P:peptidoglycan biosynthetic process"/>
    <property type="evidence" value="ECO:0007669"/>
    <property type="project" value="TreeGrafter"/>
</dbReference>
<dbReference type="GO" id="GO:0006048">
    <property type="term" value="P:UDP-N-acetylglucosamine biosynthetic process"/>
    <property type="evidence" value="ECO:0007669"/>
    <property type="project" value="TreeGrafter"/>
</dbReference>
<dbReference type="CDD" id="cd05802">
    <property type="entry name" value="GlmM"/>
    <property type="match status" value="1"/>
</dbReference>
<dbReference type="FunFam" id="3.30.310.50:FF:000001">
    <property type="entry name" value="Phosphoglucosamine mutase"/>
    <property type="match status" value="1"/>
</dbReference>
<dbReference type="FunFam" id="3.40.120.10:FF:000001">
    <property type="entry name" value="Phosphoglucosamine mutase"/>
    <property type="match status" value="1"/>
</dbReference>
<dbReference type="FunFam" id="3.40.120.10:FF:000003">
    <property type="entry name" value="Phosphoglucosamine mutase"/>
    <property type="match status" value="1"/>
</dbReference>
<dbReference type="Gene3D" id="3.40.120.10">
    <property type="entry name" value="Alpha-D-Glucose-1,6-Bisphosphate, subunit A, domain 3"/>
    <property type="match status" value="3"/>
</dbReference>
<dbReference type="Gene3D" id="3.30.310.50">
    <property type="entry name" value="Alpha-D-phosphohexomutase, C-terminal domain"/>
    <property type="match status" value="1"/>
</dbReference>
<dbReference type="HAMAP" id="MF_01554_B">
    <property type="entry name" value="GlmM_B"/>
    <property type="match status" value="1"/>
</dbReference>
<dbReference type="InterPro" id="IPR005844">
    <property type="entry name" value="A-D-PHexomutase_a/b/a-I"/>
</dbReference>
<dbReference type="InterPro" id="IPR016055">
    <property type="entry name" value="A-D-PHexomutase_a/b/a-I/II/III"/>
</dbReference>
<dbReference type="InterPro" id="IPR005845">
    <property type="entry name" value="A-D-PHexomutase_a/b/a-II"/>
</dbReference>
<dbReference type="InterPro" id="IPR005846">
    <property type="entry name" value="A-D-PHexomutase_a/b/a-III"/>
</dbReference>
<dbReference type="InterPro" id="IPR005843">
    <property type="entry name" value="A-D-PHexomutase_C"/>
</dbReference>
<dbReference type="InterPro" id="IPR036900">
    <property type="entry name" value="A-D-PHexomutase_C_sf"/>
</dbReference>
<dbReference type="InterPro" id="IPR016066">
    <property type="entry name" value="A-D-PHexomutase_CS"/>
</dbReference>
<dbReference type="InterPro" id="IPR005841">
    <property type="entry name" value="Alpha-D-phosphohexomutase_SF"/>
</dbReference>
<dbReference type="InterPro" id="IPR006352">
    <property type="entry name" value="GlmM_bact"/>
</dbReference>
<dbReference type="InterPro" id="IPR050060">
    <property type="entry name" value="Phosphoglucosamine_mutase"/>
</dbReference>
<dbReference type="NCBIfam" id="TIGR01455">
    <property type="entry name" value="glmM"/>
    <property type="match status" value="1"/>
</dbReference>
<dbReference type="NCBIfam" id="NF008139">
    <property type="entry name" value="PRK10887.1"/>
    <property type="match status" value="1"/>
</dbReference>
<dbReference type="PANTHER" id="PTHR42946:SF1">
    <property type="entry name" value="PHOSPHOGLUCOMUTASE (ALPHA-D-GLUCOSE-1,6-BISPHOSPHATE-DEPENDENT)"/>
    <property type="match status" value="1"/>
</dbReference>
<dbReference type="PANTHER" id="PTHR42946">
    <property type="entry name" value="PHOSPHOHEXOSE MUTASE"/>
    <property type="match status" value="1"/>
</dbReference>
<dbReference type="Pfam" id="PF02878">
    <property type="entry name" value="PGM_PMM_I"/>
    <property type="match status" value="1"/>
</dbReference>
<dbReference type="Pfam" id="PF02879">
    <property type="entry name" value="PGM_PMM_II"/>
    <property type="match status" value="1"/>
</dbReference>
<dbReference type="Pfam" id="PF02880">
    <property type="entry name" value="PGM_PMM_III"/>
    <property type="match status" value="1"/>
</dbReference>
<dbReference type="Pfam" id="PF00408">
    <property type="entry name" value="PGM_PMM_IV"/>
    <property type="match status" value="1"/>
</dbReference>
<dbReference type="PRINTS" id="PR00509">
    <property type="entry name" value="PGMPMM"/>
</dbReference>
<dbReference type="SUPFAM" id="SSF55957">
    <property type="entry name" value="Phosphoglucomutase, C-terminal domain"/>
    <property type="match status" value="1"/>
</dbReference>
<dbReference type="SUPFAM" id="SSF53738">
    <property type="entry name" value="Phosphoglucomutase, first 3 domains"/>
    <property type="match status" value="3"/>
</dbReference>
<dbReference type="PROSITE" id="PS00710">
    <property type="entry name" value="PGM_PMM"/>
    <property type="match status" value="1"/>
</dbReference>
<keyword id="KW-0413">Isomerase</keyword>
<keyword id="KW-0460">Magnesium</keyword>
<keyword id="KW-0479">Metal-binding</keyword>
<keyword id="KW-0597">Phosphoprotein</keyword>
<keyword id="KW-1185">Reference proteome</keyword>
<comment type="function">
    <text evidence="1">Catalyzes the conversion of glucosamine-6-phosphate to glucosamine-1-phosphate.</text>
</comment>
<comment type="catalytic activity">
    <reaction evidence="1">
        <text>alpha-D-glucosamine 1-phosphate = D-glucosamine 6-phosphate</text>
        <dbReference type="Rhea" id="RHEA:23424"/>
        <dbReference type="ChEBI" id="CHEBI:58516"/>
        <dbReference type="ChEBI" id="CHEBI:58725"/>
        <dbReference type="EC" id="5.4.2.10"/>
    </reaction>
</comment>
<comment type="cofactor">
    <cofactor evidence="1">
        <name>Mg(2+)</name>
        <dbReference type="ChEBI" id="CHEBI:18420"/>
    </cofactor>
    <text evidence="1">Binds 1 Mg(2+) ion per subunit.</text>
</comment>
<comment type="PTM">
    <text evidence="1">Activated by phosphorylation.</text>
</comment>
<comment type="similarity">
    <text evidence="1">Belongs to the phosphohexose mutase family.</text>
</comment>
<name>GLMM_AFIC5</name>